<accession>P52239</accession>
<evidence type="ECO:0000255" key="1">
    <source>
        <dbReference type="PROSITE-ProRule" id="PRU00798"/>
    </source>
</evidence>
<feature type="chain" id="PRO_0000073067" description="Ovomucoid">
    <location>
        <begin position="1" status="less than"/>
        <end position="54" status="greater than"/>
    </location>
</feature>
<feature type="domain" description="Kazal-like" evidence="1">
    <location>
        <begin position="4"/>
        <end position="54"/>
    </location>
</feature>
<feature type="site" description="Reactive bond 3">
    <location>
        <begin position="16"/>
        <end position="17"/>
    </location>
</feature>
<feature type="glycosylation site" description="N-linked (GlcNAc...) asparagine">
    <location>
        <position position="43"/>
    </location>
</feature>
<feature type="disulfide bond">
    <location>
        <begin position="6"/>
        <end position="36"/>
    </location>
</feature>
<feature type="disulfide bond">
    <location>
        <begin position="14"/>
        <end position="33"/>
    </location>
</feature>
<feature type="disulfide bond">
    <location>
        <begin position="22"/>
        <end position="54"/>
    </location>
</feature>
<feature type="non-terminal residue">
    <location>
        <position position="1"/>
    </location>
</feature>
<feature type="non-terminal residue">
    <location>
        <position position="54"/>
    </location>
</feature>
<proteinExistence type="evidence at protein level"/>
<dbReference type="PIR" id="A61589">
    <property type="entry name" value="A61589"/>
</dbReference>
<dbReference type="SMR" id="P52239"/>
<dbReference type="GO" id="GO:0005576">
    <property type="term" value="C:extracellular region"/>
    <property type="evidence" value="ECO:0007669"/>
    <property type="project" value="UniProtKB-SubCell"/>
</dbReference>
<dbReference type="GO" id="GO:0004867">
    <property type="term" value="F:serine-type endopeptidase inhibitor activity"/>
    <property type="evidence" value="ECO:0007669"/>
    <property type="project" value="UniProtKB-KW"/>
</dbReference>
<dbReference type="CDD" id="cd00104">
    <property type="entry name" value="KAZAL_FS"/>
    <property type="match status" value="1"/>
</dbReference>
<dbReference type="FunFam" id="3.30.60.30:FF:000037">
    <property type="entry name" value="Ovomucoid"/>
    <property type="match status" value="1"/>
</dbReference>
<dbReference type="Gene3D" id="3.30.60.30">
    <property type="match status" value="1"/>
</dbReference>
<dbReference type="InterPro" id="IPR051597">
    <property type="entry name" value="Bifunctional_prot_inhibitor"/>
</dbReference>
<dbReference type="InterPro" id="IPR002350">
    <property type="entry name" value="Kazal_dom"/>
</dbReference>
<dbReference type="InterPro" id="IPR036058">
    <property type="entry name" value="Kazal_dom_sf"/>
</dbReference>
<dbReference type="InterPro" id="IPR001239">
    <property type="entry name" value="Prot_inh_Kazal-m"/>
</dbReference>
<dbReference type="PANTHER" id="PTHR47729:SF1">
    <property type="entry name" value="OVOMUCOID-LIKE-RELATED"/>
    <property type="match status" value="1"/>
</dbReference>
<dbReference type="PANTHER" id="PTHR47729">
    <property type="entry name" value="SERINE PEPTIDASE INHIBITOR, KAZAL TYPE 2, TANDEM DUPLICATE 1-RELATED"/>
    <property type="match status" value="1"/>
</dbReference>
<dbReference type="Pfam" id="PF00050">
    <property type="entry name" value="Kazal_1"/>
    <property type="match status" value="1"/>
</dbReference>
<dbReference type="PRINTS" id="PR00290">
    <property type="entry name" value="KAZALINHBTR"/>
</dbReference>
<dbReference type="SMART" id="SM00280">
    <property type="entry name" value="KAZAL"/>
    <property type="match status" value="1"/>
</dbReference>
<dbReference type="SUPFAM" id="SSF100895">
    <property type="entry name" value="Kazal-type serine protease inhibitors"/>
    <property type="match status" value="1"/>
</dbReference>
<dbReference type="PROSITE" id="PS00282">
    <property type="entry name" value="KAZAL_1"/>
    <property type="match status" value="1"/>
</dbReference>
<dbReference type="PROSITE" id="PS51465">
    <property type="entry name" value="KAZAL_2"/>
    <property type="match status" value="1"/>
</dbReference>
<comment type="subcellular location">
    <subcellularLocation>
        <location>Secreted</location>
    </subcellularLocation>
</comment>
<comment type="domain">
    <text>Avian ovomucoid consists of three homologous, tandem Kazal family inhibitory domains.</text>
</comment>
<protein>
    <recommendedName>
        <fullName>Ovomucoid</fullName>
    </recommendedName>
</protein>
<organism>
    <name type="scientific">Balearica pavonina</name>
    <name type="common">Black crowned-crane</name>
    <dbReference type="NCBI Taxonomy" id="30414"/>
    <lineage>
        <taxon>Eukaryota</taxon>
        <taxon>Metazoa</taxon>
        <taxon>Chordata</taxon>
        <taxon>Craniata</taxon>
        <taxon>Vertebrata</taxon>
        <taxon>Euteleostomi</taxon>
        <taxon>Archelosauria</taxon>
        <taxon>Archosauria</taxon>
        <taxon>Dinosauria</taxon>
        <taxon>Saurischia</taxon>
        <taxon>Theropoda</taxon>
        <taxon>Coelurosauria</taxon>
        <taxon>Aves</taxon>
        <taxon>Neognathae</taxon>
        <taxon>Neoaves</taxon>
        <taxon>Gruiformes</taxon>
        <taxon>Gruidae</taxon>
        <taxon>Balearica</taxon>
    </lineage>
</organism>
<reference key="1">
    <citation type="journal article" date="1993" name="J. Protein Chem.">
        <title>Amino acid sequences of ovomucoid third domains from 27 additional species of birds.</title>
        <authorList>
            <person name="Apostol I."/>
            <person name="Giletto A."/>
            <person name="Komiyama T."/>
            <person name="Zhang W."/>
            <person name="Laskowski M. Jr."/>
        </authorList>
    </citation>
    <scope>PROTEIN SEQUENCE</scope>
</reference>
<keyword id="KW-0903">Direct protein sequencing</keyword>
<keyword id="KW-1015">Disulfide bond</keyword>
<keyword id="KW-0325">Glycoprotein</keyword>
<keyword id="KW-0646">Protease inhibitor</keyword>
<keyword id="KW-0677">Repeat</keyword>
<keyword id="KW-0964">Secreted</keyword>
<keyword id="KW-0722">Serine protease inhibitor</keyword>
<sequence>TAMVDCSDYPKPACTLEYMPFCGSDSKTYSNKCNFCNAVVDSNGTLTLSHFGKC</sequence>
<name>IOVO_BALPA</name>